<reference key="1">
    <citation type="journal article" date="2002" name="DNA Res.">
        <title>Complete genome structure of the thermophilic cyanobacterium Thermosynechococcus elongatus BP-1.</title>
        <authorList>
            <person name="Nakamura Y."/>
            <person name="Kaneko T."/>
            <person name="Sato S."/>
            <person name="Ikeuchi M."/>
            <person name="Katoh H."/>
            <person name="Sasamoto S."/>
            <person name="Watanabe A."/>
            <person name="Iriguchi M."/>
            <person name="Kawashima K."/>
            <person name="Kimura T."/>
            <person name="Kishida Y."/>
            <person name="Kiyokawa C."/>
            <person name="Kohara M."/>
            <person name="Matsumoto M."/>
            <person name="Matsuno A."/>
            <person name="Nakazaki N."/>
            <person name="Shimpo S."/>
            <person name="Sugimoto M."/>
            <person name="Takeuchi C."/>
            <person name="Yamada M."/>
            <person name="Tabata S."/>
        </authorList>
    </citation>
    <scope>NUCLEOTIDE SEQUENCE [LARGE SCALE GENOMIC DNA]</scope>
    <source>
        <strain>NIES-2133 / IAM M-273 / BP-1</strain>
    </source>
</reference>
<protein>
    <recommendedName>
        <fullName evidence="1">Glutamyl-tRNA(Gln) amidotransferase subunit A</fullName>
        <shortName evidence="1">Glu-ADT subunit A</shortName>
        <ecNumber evidence="1">6.3.5.7</ecNumber>
    </recommendedName>
</protein>
<accession>Q8DK65</accession>
<comment type="function">
    <text evidence="1">Allows the formation of correctly charged Gln-tRNA(Gln) through the transamidation of misacylated Glu-tRNA(Gln) in organisms which lack glutaminyl-tRNA synthetase. The reaction takes place in the presence of glutamine and ATP through an activated gamma-phospho-Glu-tRNA(Gln).</text>
</comment>
<comment type="catalytic activity">
    <reaction evidence="1">
        <text>L-glutamyl-tRNA(Gln) + L-glutamine + ATP + H2O = L-glutaminyl-tRNA(Gln) + L-glutamate + ADP + phosphate + H(+)</text>
        <dbReference type="Rhea" id="RHEA:17521"/>
        <dbReference type="Rhea" id="RHEA-COMP:9681"/>
        <dbReference type="Rhea" id="RHEA-COMP:9684"/>
        <dbReference type="ChEBI" id="CHEBI:15377"/>
        <dbReference type="ChEBI" id="CHEBI:15378"/>
        <dbReference type="ChEBI" id="CHEBI:29985"/>
        <dbReference type="ChEBI" id="CHEBI:30616"/>
        <dbReference type="ChEBI" id="CHEBI:43474"/>
        <dbReference type="ChEBI" id="CHEBI:58359"/>
        <dbReference type="ChEBI" id="CHEBI:78520"/>
        <dbReference type="ChEBI" id="CHEBI:78521"/>
        <dbReference type="ChEBI" id="CHEBI:456216"/>
        <dbReference type="EC" id="6.3.5.7"/>
    </reaction>
</comment>
<comment type="subunit">
    <text evidence="1">Heterotrimer of A, B and C subunits.</text>
</comment>
<comment type="similarity">
    <text evidence="1">Belongs to the amidase family. GatA subfamily.</text>
</comment>
<comment type="sequence caution" evidence="2">
    <conflict type="erroneous initiation">
        <sequence resource="EMBL-CDS" id="BAC08555"/>
    </conflict>
</comment>
<gene>
    <name evidence="1" type="primary">gatA</name>
    <name type="ordered locus">tll1003</name>
</gene>
<keyword id="KW-0067">ATP-binding</keyword>
<keyword id="KW-0436">Ligase</keyword>
<keyword id="KW-0547">Nucleotide-binding</keyword>
<keyword id="KW-0648">Protein biosynthesis</keyword>
<keyword id="KW-1185">Reference proteome</keyword>
<dbReference type="EC" id="6.3.5.7" evidence="1"/>
<dbReference type="EMBL" id="BA000039">
    <property type="protein sequence ID" value="BAC08555.1"/>
    <property type="status" value="ALT_INIT"/>
    <property type="molecule type" value="Genomic_DNA"/>
</dbReference>
<dbReference type="RefSeq" id="NP_681793.1">
    <property type="nucleotide sequence ID" value="NC_004113.1"/>
</dbReference>
<dbReference type="RefSeq" id="WP_164920797.1">
    <property type="nucleotide sequence ID" value="NC_004113.1"/>
</dbReference>
<dbReference type="SMR" id="Q8DK65"/>
<dbReference type="STRING" id="197221.gene:10747595"/>
<dbReference type="EnsemblBacteria" id="BAC08555">
    <property type="protein sequence ID" value="BAC08555"/>
    <property type="gene ID" value="BAC08555"/>
</dbReference>
<dbReference type="KEGG" id="tel:tll1003"/>
<dbReference type="PATRIC" id="fig|197221.4.peg.1053"/>
<dbReference type="eggNOG" id="COG0154">
    <property type="taxonomic scope" value="Bacteria"/>
</dbReference>
<dbReference type="Proteomes" id="UP000000440">
    <property type="component" value="Chromosome"/>
</dbReference>
<dbReference type="GO" id="GO:0030956">
    <property type="term" value="C:glutamyl-tRNA(Gln) amidotransferase complex"/>
    <property type="evidence" value="ECO:0007669"/>
    <property type="project" value="InterPro"/>
</dbReference>
<dbReference type="GO" id="GO:0005524">
    <property type="term" value="F:ATP binding"/>
    <property type="evidence" value="ECO:0007669"/>
    <property type="project" value="UniProtKB-KW"/>
</dbReference>
<dbReference type="GO" id="GO:0050567">
    <property type="term" value="F:glutaminyl-tRNA synthase (glutamine-hydrolyzing) activity"/>
    <property type="evidence" value="ECO:0007669"/>
    <property type="project" value="UniProtKB-UniRule"/>
</dbReference>
<dbReference type="GO" id="GO:0006412">
    <property type="term" value="P:translation"/>
    <property type="evidence" value="ECO:0007669"/>
    <property type="project" value="UniProtKB-UniRule"/>
</dbReference>
<dbReference type="Gene3D" id="3.90.1300.10">
    <property type="entry name" value="Amidase signature (AS) domain"/>
    <property type="match status" value="1"/>
</dbReference>
<dbReference type="HAMAP" id="MF_00120">
    <property type="entry name" value="GatA"/>
    <property type="match status" value="1"/>
</dbReference>
<dbReference type="InterPro" id="IPR000120">
    <property type="entry name" value="Amidase"/>
</dbReference>
<dbReference type="InterPro" id="IPR020556">
    <property type="entry name" value="Amidase_CS"/>
</dbReference>
<dbReference type="InterPro" id="IPR023631">
    <property type="entry name" value="Amidase_dom"/>
</dbReference>
<dbReference type="InterPro" id="IPR036928">
    <property type="entry name" value="AS_sf"/>
</dbReference>
<dbReference type="InterPro" id="IPR004412">
    <property type="entry name" value="GatA"/>
</dbReference>
<dbReference type="NCBIfam" id="TIGR00132">
    <property type="entry name" value="gatA"/>
    <property type="match status" value="1"/>
</dbReference>
<dbReference type="PANTHER" id="PTHR11895:SF151">
    <property type="entry name" value="GLUTAMYL-TRNA(GLN) AMIDOTRANSFERASE SUBUNIT A"/>
    <property type="match status" value="1"/>
</dbReference>
<dbReference type="PANTHER" id="PTHR11895">
    <property type="entry name" value="TRANSAMIDASE"/>
    <property type="match status" value="1"/>
</dbReference>
<dbReference type="Pfam" id="PF01425">
    <property type="entry name" value="Amidase"/>
    <property type="match status" value="1"/>
</dbReference>
<dbReference type="SUPFAM" id="SSF75304">
    <property type="entry name" value="Amidase signature (AS) enzymes"/>
    <property type="match status" value="1"/>
</dbReference>
<dbReference type="PROSITE" id="PS00571">
    <property type="entry name" value="AMIDASES"/>
    <property type="match status" value="1"/>
</dbReference>
<name>GATA_THEVB</name>
<organism>
    <name type="scientific">Thermosynechococcus vestitus (strain NIES-2133 / IAM M-273 / BP-1)</name>
    <dbReference type="NCBI Taxonomy" id="197221"/>
    <lineage>
        <taxon>Bacteria</taxon>
        <taxon>Bacillati</taxon>
        <taxon>Cyanobacteriota</taxon>
        <taxon>Cyanophyceae</taxon>
        <taxon>Acaryochloridales</taxon>
        <taxon>Thermosynechococcaceae</taxon>
        <taxon>Thermosynechococcus</taxon>
    </lineage>
</organism>
<sequence>MSVIQELHRQLVRKERSATEITQAYLDRIAQVEPTLHSFLTVTRDRALAQAAEVDKRLAAGEEIGLLTGIPLAIKDNLCTYGVRTTCASKMLEHFVPPYESTVTEKLQAAGAIMVGKTNLDEFAMGSSTENSAFGFTANPWNPERVSGGSSGGSAAAVAARECAAALGSDTGGSIRQPAAFCGVVGLKPTYGLVSRYGLVAYASSLDQIGPLAPTVTDAAILLGAIAGHDPKDATSLRVPIPDYTQALKPDLKGMRIGLIQETVGEGVQPEVKSALEAALKTLEALGATLVELSCPRFAYGLPTYYIIAPSEASANLARYDGVNFGFRAEGASDLLEMYMKTRAQGFGAEVKRRIMIGTYALSAGYYDAYYLRAQKVRTLIKEDFARAFEQVDVLICPTAPTTAFKAGEKTADPLSMYLSDLMTIPVNLAGLPGLSVPCGFDSNGLPIGLQLIGNVLQEATLFHVAYAYEQTTPWHQQQPQL</sequence>
<proteinExistence type="inferred from homology"/>
<feature type="chain" id="PRO_0000105218" description="Glutamyl-tRNA(Gln) amidotransferase subunit A">
    <location>
        <begin position="1"/>
        <end position="482"/>
    </location>
</feature>
<feature type="active site" description="Charge relay system" evidence="1">
    <location>
        <position position="75"/>
    </location>
</feature>
<feature type="active site" description="Charge relay system" evidence="1">
    <location>
        <position position="150"/>
    </location>
</feature>
<feature type="active site" description="Acyl-ester intermediate" evidence="1">
    <location>
        <position position="174"/>
    </location>
</feature>
<evidence type="ECO:0000255" key="1">
    <source>
        <dbReference type="HAMAP-Rule" id="MF_00120"/>
    </source>
</evidence>
<evidence type="ECO:0000305" key="2"/>